<organism>
    <name type="scientific">Yersinia pestis</name>
    <dbReference type="NCBI Taxonomy" id="632"/>
    <lineage>
        <taxon>Bacteria</taxon>
        <taxon>Pseudomonadati</taxon>
        <taxon>Pseudomonadota</taxon>
        <taxon>Gammaproteobacteria</taxon>
        <taxon>Enterobacterales</taxon>
        <taxon>Yersiniaceae</taxon>
        <taxon>Yersinia</taxon>
    </lineage>
</organism>
<protein>
    <recommendedName>
        <fullName evidence="1">Spermidine export protein MdtJ</fullName>
    </recommendedName>
</protein>
<comment type="function">
    <text evidence="1">Catalyzes the excretion of spermidine.</text>
</comment>
<comment type="subunit">
    <text evidence="1">Forms a complex with MdtI.</text>
</comment>
<comment type="subcellular location">
    <subcellularLocation>
        <location evidence="1">Cell inner membrane</location>
        <topology evidence="1">Multi-pass membrane protein</topology>
    </subcellularLocation>
</comment>
<comment type="similarity">
    <text evidence="1">Belongs to the drug/metabolite transporter (DMT) superfamily. Small multidrug resistance (SMR) (TC 2.A.7.1) family. MdtJ subfamily.</text>
</comment>
<comment type="sequence caution" evidence="3">
    <conflict type="erroneous initiation">
        <sequence resource="EMBL-CDS" id="AAM85802"/>
    </conflict>
</comment>
<comment type="sequence caution" evidence="3">
    <conflict type="erroneous initiation">
        <sequence resource="EMBL-CDS" id="AAS62129"/>
    </conflict>
</comment>
<comment type="sequence caution" evidence="3">
    <conflict type="erroneous initiation">
        <sequence resource="EMBL-CDS" id="CAL20703"/>
    </conflict>
</comment>
<feature type="chain" id="PRO_0000331186" description="Spermidine export protein MdtJ">
    <location>
        <begin position="1"/>
        <end position="147"/>
    </location>
</feature>
<feature type="transmembrane region" description="Helical" evidence="1">
    <location>
        <begin position="1"/>
        <end position="21"/>
    </location>
</feature>
<feature type="transmembrane region" description="Helical" evidence="1">
    <location>
        <begin position="31"/>
        <end position="51"/>
    </location>
</feature>
<feature type="transmembrane region" description="Helical" evidence="1">
    <location>
        <begin position="54"/>
        <end position="74"/>
    </location>
</feature>
<feature type="transmembrane region" description="Helical" evidence="1">
    <location>
        <begin position="81"/>
        <end position="101"/>
    </location>
</feature>
<feature type="region of interest" description="Disordered" evidence="2">
    <location>
        <begin position="105"/>
        <end position="147"/>
    </location>
</feature>
<keyword id="KW-0997">Cell inner membrane</keyword>
<keyword id="KW-1003">Cell membrane</keyword>
<keyword id="KW-0472">Membrane</keyword>
<keyword id="KW-1185">Reference proteome</keyword>
<keyword id="KW-0812">Transmembrane</keyword>
<keyword id="KW-1133">Transmembrane helix</keyword>
<keyword id="KW-0813">Transport</keyword>
<reference key="1">
    <citation type="journal article" date="2001" name="Nature">
        <title>Genome sequence of Yersinia pestis, the causative agent of plague.</title>
        <authorList>
            <person name="Parkhill J."/>
            <person name="Wren B.W."/>
            <person name="Thomson N.R."/>
            <person name="Titball R.W."/>
            <person name="Holden M.T.G."/>
            <person name="Prentice M.B."/>
            <person name="Sebaihia M."/>
            <person name="James K.D."/>
            <person name="Churcher C.M."/>
            <person name="Mungall K.L."/>
            <person name="Baker S."/>
            <person name="Basham D."/>
            <person name="Bentley S.D."/>
            <person name="Brooks K."/>
            <person name="Cerdeno-Tarraga A.-M."/>
            <person name="Chillingworth T."/>
            <person name="Cronin A."/>
            <person name="Davies R.M."/>
            <person name="Davis P."/>
            <person name="Dougan G."/>
            <person name="Feltwell T."/>
            <person name="Hamlin N."/>
            <person name="Holroyd S."/>
            <person name="Jagels K."/>
            <person name="Karlyshev A.V."/>
            <person name="Leather S."/>
            <person name="Moule S."/>
            <person name="Oyston P.C.F."/>
            <person name="Quail M.A."/>
            <person name="Rutherford K.M."/>
            <person name="Simmonds M."/>
            <person name="Skelton J."/>
            <person name="Stevens K."/>
            <person name="Whitehead S."/>
            <person name="Barrell B.G."/>
        </authorList>
    </citation>
    <scope>NUCLEOTIDE SEQUENCE [LARGE SCALE GENOMIC DNA]</scope>
    <source>
        <strain>CO-92 / Biovar Orientalis</strain>
    </source>
</reference>
<reference key="2">
    <citation type="journal article" date="2002" name="J. Bacteriol.">
        <title>Genome sequence of Yersinia pestis KIM.</title>
        <authorList>
            <person name="Deng W."/>
            <person name="Burland V."/>
            <person name="Plunkett G. III"/>
            <person name="Boutin A."/>
            <person name="Mayhew G.F."/>
            <person name="Liss P."/>
            <person name="Perna N.T."/>
            <person name="Rose D.J."/>
            <person name="Mau B."/>
            <person name="Zhou S."/>
            <person name="Schwartz D.C."/>
            <person name="Fetherston J.D."/>
            <person name="Lindler L.E."/>
            <person name="Brubaker R.R."/>
            <person name="Plano G.V."/>
            <person name="Straley S.C."/>
            <person name="McDonough K.A."/>
            <person name="Nilles M.L."/>
            <person name="Matson J.S."/>
            <person name="Blattner F.R."/>
            <person name="Perry R.D."/>
        </authorList>
    </citation>
    <scope>NUCLEOTIDE SEQUENCE [LARGE SCALE GENOMIC DNA]</scope>
    <source>
        <strain>KIM10+ / Biovar Mediaevalis</strain>
    </source>
</reference>
<reference key="3">
    <citation type="journal article" date="2004" name="DNA Res.">
        <title>Complete genome sequence of Yersinia pestis strain 91001, an isolate avirulent to humans.</title>
        <authorList>
            <person name="Song Y."/>
            <person name="Tong Z."/>
            <person name="Wang J."/>
            <person name="Wang L."/>
            <person name="Guo Z."/>
            <person name="Han Y."/>
            <person name="Zhang J."/>
            <person name="Pei D."/>
            <person name="Zhou D."/>
            <person name="Qin H."/>
            <person name="Pang X."/>
            <person name="Han Y."/>
            <person name="Zhai J."/>
            <person name="Li M."/>
            <person name="Cui B."/>
            <person name="Qi Z."/>
            <person name="Jin L."/>
            <person name="Dai R."/>
            <person name="Chen F."/>
            <person name="Li S."/>
            <person name="Ye C."/>
            <person name="Du Z."/>
            <person name="Lin W."/>
            <person name="Wang J."/>
            <person name="Yu J."/>
            <person name="Yang H."/>
            <person name="Wang J."/>
            <person name="Huang P."/>
            <person name="Yang R."/>
        </authorList>
    </citation>
    <scope>NUCLEOTIDE SEQUENCE [LARGE SCALE GENOMIC DNA]</scope>
    <source>
        <strain>91001 / Biovar Mediaevalis</strain>
    </source>
</reference>
<dbReference type="EMBL" id="AL590842">
    <property type="protein sequence ID" value="CAL20703.1"/>
    <property type="status" value="ALT_INIT"/>
    <property type="molecule type" value="Genomic_DNA"/>
</dbReference>
<dbReference type="EMBL" id="AE009952">
    <property type="protein sequence ID" value="AAM85802.1"/>
    <property type="status" value="ALT_INIT"/>
    <property type="molecule type" value="Genomic_DNA"/>
</dbReference>
<dbReference type="EMBL" id="AE017042">
    <property type="protein sequence ID" value="AAS62129.1"/>
    <property type="status" value="ALT_INIT"/>
    <property type="molecule type" value="Genomic_DNA"/>
</dbReference>
<dbReference type="PIR" id="AD0252">
    <property type="entry name" value="AD0252"/>
</dbReference>
<dbReference type="RefSeq" id="WP_002211188.1">
    <property type="nucleotide sequence ID" value="NZ_WUCM01000062.1"/>
</dbReference>
<dbReference type="RefSeq" id="YP_002347050.1">
    <property type="nucleotide sequence ID" value="NC_003143.1"/>
</dbReference>
<dbReference type="SMR" id="Q7CIC6"/>
<dbReference type="STRING" id="214092.YPO2068"/>
<dbReference type="PaxDb" id="214092-YPO2068"/>
<dbReference type="DNASU" id="1147189"/>
<dbReference type="EnsemblBacteria" id="AAS62129">
    <property type="protein sequence ID" value="AAS62129"/>
    <property type="gene ID" value="YP_1911"/>
</dbReference>
<dbReference type="GeneID" id="57976593"/>
<dbReference type="KEGG" id="ype:YPO2068"/>
<dbReference type="KEGG" id="ypk:y2242"/>
<dbReference type="KEGG" id="ypm:YP_1911"/>
<dbReference type="PATRIC" id="fig|214092.21.peg.2457"/>
<dbReference type="eggNOG" id="COG2076">
    <property type="taxonomic scope" value="Bacteria"/>
</dbReference>
<dbReference type="HOGENOM" id="CLU_133067_0_0_6"/>
<dbReference type="OMA" id="MRSWIYL"/>
<dbReference type="Proteomes" id="UP000000815">
    <property type="component" value="Chromosome"/>
</dbReference>
<dbReference type="Proteomes" id="UP000001019">
    <property type="component" value="Chromosome"/>
</dbReference>
<dbReference type="Proteomes" id="UP000002490">
    <property type="component" value="Chromosome"/>
</dbReference>
<dbReference type="GO" id="GO:0005886">
    <property type="term" value="C:plasma membrane"/>
    <property type="evidence" value="ECO:0000318"/>
    <property type="project" value="GO_Central"/>
</dbReference>
<dbReference type="GO" id="GO:0015199">
    <property type="term" value="F:amino-acid betaine transmembrane transporter activity"/>
    <property type="evidence" value="ECO:0000318"/>
    <property type="project" value="GO_Central"/>
</dbReference>
<dbReference type="GO" id="GO:0015297">
    <property type="term" value="F:antiporter activity"/>
    <property type="evidence" value="ECO:0000318"/>
    <property type="project" value="GO_Central"/>
</dbReference>
<dbReference type="GO" id="GO:0015220">
    <property type="term" value="F:choline transmembrane transporter activity"/>
    <property type="evidence" value="ECO:0000318"/>
    <property type="project" value="GO_Central"/>
</dbReference>
<dbReference type="GO" id="GO:0015606">
    <property type="term" value="F:spermidine transmembrane transporter activity"/>
    <property type="evidence" value="ECO:0007669"/>
    <property type="project" value="UniProtKB-UniRule"/>
</dbReference>
<dbReference type="GO" id="GO:0015871">
    <property type="term" value="P:choline transport"/>
    <property type="evidence" value="ECO:0000318"/>
    <property type="project" value="GO_Central"/>
</dbReference>
<dbReference type="GO" id="GO:0031460">
    <property type="term" value="P:glycine betaine transport"/>
    <property type="evidence" value="ECO:0000318"/>
    <property type="project" value="GO_Central"/>
</dbReference>
<dbReference type="GO" id="GO:1903711">
    <property type="term" value="P:spermidine transmembrane transport"/>
    <property type="evidence" value="ECO:0000318"/>
    <property type="project" value="GO_Central"/>
</dbReference>
<dbReference type="FunFam" id="1.10.3730.20:FF:000001">
    <property type="entry name" value="Quaternary ammonium compound resistance transporter SugE"/>
    <property type="match status" value="1"/>
</dbReference>
<dbReference type="Gene3D" id="1.10.3730.20">
    <property type="match status" value="1"/>
</dbReference>
<dbReference type="HAMAP" id="MF_01598">
    <property type="entry name" value="MdtJ"/>
    <property type="match status" value="1"/>
</dbReference>
<dbReference type="InterPro" id="IPR000390">
    <property type="entry name" value="Small_drug/metabolite_transptr"/>
</dbReference>
<dbReference type="InterPro" id="IPR045324">
    <property type="entry name" value="Small_multidrug_res"/>
</dbReference>
<dbReference type="InterPro" id="IPR023740">
    <property type="entry name" value="Spermidine_export_MdtJ"/>
</dbReference>
<dbReference type="NCBIfam" id="NF007767">
    <property type="entry name" value="PRK10452.1"/>
    <property type="match status" value="1"/>
</dbReference>
<dbReference type="PANTHER" id="PTHR30561">
    <property type="entry name" value="SMR FAMILY PROTON-DEPENDENT DRUG EFFLUX TRANSPORTER SUGE"/>
    <property type="match status" value="1"/>
</dbReference>
<dbReference type="PANTHER" id="PTHR30561:SF2">
    <property type="entry name" value="SPERMIDINE EXPORT PROTEIN MDTJ"/>
    <property type="match status" value="1"/>
</dbReference>
<dbReference type="Pfam" id="PF00893">
    <property type="entry name" value="Multi_Drug_Res"/>
    <property type="match status" value="1"/>
</dbReference>
<dbReference type="SUPFAM" id="SSF103481">
    <property type="entry name" value="Multidrug resistance efflux transporter EmrE"/>
    <property type="match status" value="1"/>
</dbReference>
<sequence length="147" mass="15852">MIYWIFLGLAIIAEIIGTLSMKYASVSGEMTGHIVMYFMITGSYVMLSLAVKKVALGVAYALWEGIGILIITIFSVMWFGETLSPLKIAGLVTLIGGILLVKSGTRKPKQPNCHRGNRPPSVQELKTQTTGHHKGVAVESGEHHAAA</sequence>
<accession>Q7CIC6</accession>
<accession>Q74U40</accession>
<gene>
    <name evidence="1" type="primary">mdtJ</name>
    <name type="ordered locus">YPO2068</name>
    <name type="ordered locus">y2242</name>
    <name type="ordered locus">YP_1911</name>
</gene>
<evidence type="ECO:0000255" key="1">
    <source>
        <dbReference type="HAMAP-Rule" id="MF_01598"/>
    </source>
</evidence>
<evidence type="ECO:0000256" key="2">
    <source>
        <dbReference type="SAM" id="MobiDB-lite"/>
    </source>
</evidence>
<evidence type="ECO:0000305" key="3"/>
<proteinExistence type="inferred from homology"/>
<name>MDTJ_YERPE</name>